<keyword id="KW-0165">Cleavage on pair of basic residues</keyword>
<keyword id="KW-1015">Disulfide bond</keyword>
<keyword id="KW-0960">Knottin</keyword>
<keyword id="KW-0873">Pyrrolidone carboxylic acid</keyword>
<keyword id="KW-0964">Secreted</keyword>
<keyword id="KW-0732">Signal</keyword>
<keyword id="KW-0800">Toxin</keyword>
<name>O161_CONIM</name>
<evidence type="ECO:0000250" key="1"/>
<evidence type="ECO:0000255" key="2"/>
<evidence type="ECO:0000305" key="3"/>
<accession>Q5K0B8</accession>
<proteinExistence type="evidence at transcript level"/>
<feature type="signal peptide" evidence="2">
    <location>
        <begin position="1"/>
        <end position="22"/>
    </location>
</feature>
<feature type="propeptide" id="PRO_0000034989" evidence="1">
    <location>
        <begin position="23"/>
        <end position="51"/>
    </location>
</feature>
<feature type="peptide" id="PRO_0000034990" description="Conotoxin 1">
    <location>
        <begin position="52"/>
        <end position="78"/>
    </location>
</feature>
<feature type="modified residue" description="Pyrrolidone carboxylic acid" evidence="1">
    <location>
        <position position="52"/>
    </location>
</feature>
<feature type="disulfide bond" evidence="1">
    <location>
        <begin position="53"/>
        <end position="69"/>
    </location>
</feature>
<feature type="disulfide bond" evidence="1">
    <location>
        <begin position="60"/>
        <end position="73"/>
    </location>
</feature>
<feature type="disulfide bond" evidence="1">
    <location>
        <begin position="68"/>
        <end position="77"/>
    </location>
</feature>
<reference key="1">
    <citation type="journal article" date="2005" name="Peptides">
        <title>Direct cDNA cloning of novel conopeptide precursors of the O-superfamily.</title>
        <authorList>
            <person name="Kauferstein S."/>
            <person name="Melaun C."/>
            <person name="Mebs D."/>
        </authorList>
    </citation>
    <scope>NUCLEOTIDE SEQUENCE [MRNA]</scope>
    <source>
        <tissue>Venom duct</tissue>
    </source>
</reference>
<sequence>MKLTCMMFVAVLFLTASVFITADDSRNGIENLPRMRRHEMKNPKASKLNKRQCRVEGEICGMLFEAQCCDGWCFFVCM</sequence>
<protein>
    <recommendedName>
        <fullName>Conotoxin 1</fullName>
    </recommendedName>
</protein>
<comment type="subcellular location">
    <subcellularLocation>
        <location evidence="1">Secreted</location>
    </subcellularLocation>
</comment>
<comment type="tissue specificity">
    <text>Expressed by the venom duct.</text>
</comment>
<comment type="domain">
    <text evidence="1">The presence of a 'disulfide through disulfide knot' structurally defines this protein as a knottin.</text>
</comment>
<comment type="domain">
    <text>The cysteine framework is VI/VII (C-C-CC-C-C).</text>
</comment>
<comment type="similarity">
    <text evidence="3">Belongs to the conotoxin O1 superfamily.</text>
</comment>
<organism>
    <name type="scientific">Conus imperialis</name>
    <name type="common">Imperial cone</name>
    <dbReference type="NCBI Taxonomy" id="35631"/>
    <lineage>
        <taxon>Eukaryota</taxon>
        <taxon>Metazoa</taxon>
        <taxon>Spiralia</taxon>
        <taxon>Lophotrochozoa</taxon>
        <taxon>Mollusca</taxon>
        <taxon>Gastropoda</taxon>
        <taxon>Caenogastropoda</taxon>
        <taxon>Neogastropoda</taxon>
        <taxon>Conoidea</taxon>
        <taxon>Conidae</taxon>
        <taxon>Conus</taxon>
        <taxon>Stephanoconus</taxon>
    </lineage>
</organism>
<dbReference type="EMBL" id="AJ851190">
    <property type="protein sequence ID" value="CAH64863.1"/>
    <property type="molecule type" value="mRNA"/>
</dbReference>
<dbReference type="ConoServer" id="1079">
    <property type="toxin name" value="Conotoxin-1 precursor"/>
</dbReference>
<dbReference type="GO" id="GO:0005576">
    <property type="term" value="C:extracellular region"/>
    <property type="evidence" value="ECO:0007669"/>
    <property type="project" value="UniProtKB-SubCell"/>
</dbReference>
<dbReference type="GO" id="GO:0008200">
    <property type="term" value="F:ion channel inhibitor activity"/>
    <property type="evidence" value="ECO:0007669"/>
    <property type="project" value="InterPro"/>
</dbReference>
<dbReference type="GO" id="GO:0090729">
    <property type="term" value="F:toxin activity"/>
    <property type="evidence" value="ECO:0007669"/>
    <property type="project" value="UniProtKB-KW"/>
</dbReference>
<dbReference type="InterPro" id="IPR004214">
    <property type="entry name" value="Conotoxin"/>
</dbReference>
<dbReference type="Pfam" id="PF02950">
    <property type="entry name" value="Conotoxin"/>
    <property type="match status" value="1"/>
</dbReference>